<accession>B7I3U1</accession>
<organism>
    <name type="scientific">Acinetobacter baumannii (strain AB0057)</name>
    <dbReference type="NCBI Taxonomy" id="480119"/>
    <lineage>
        <taxon>Bacteria</taxon>
        <taxon>Pseudomonadati</taxon>
        <taxon>Pseudomonadota</taxon>
        <taxon>Gammaproteobacteria</taxon>
        <taxon>Moraxellales</taxon>
        <taxon>Moraxellaceae</taxon>
        <taxon>Acinetobacter</taxon>
        <taxon>Acinetobacter calcoaceticus/baumannii complex</taxon>
    </lineage>
</organism>
<keyword id="KW-0963">Cytoplasm</keyword>
<keyword id="KW-0460">Magnesium</keyword>
<keyword id="KW-0479">Metal-binding</keyword>
<keyword id="KW-0548">Nucleotidyltransferase</keyword>
<keyword id="KW-0694">RNA-binding</keyword>
<keyword id="KW-0808">Transferase</keyword>
<comment type="function">
    <text evidence="1">Involved in mRNA degradation. Catalyzes the phosphorolysis of single-stranded polyribonucleotides processively in the 3'- to 5'-direction.</text>
</comment>
<comment type="catalytic activity">
    <reaction evidence="1">
        <text>RNA(n+1) + phosphate = RNA(n) + a ribonucleoside 5'-diphosphate</text>
        <dbReference type="Rhea" id="RHEA:22096"/>
        <dbReference type="Rhea" id="RHEA-COMP:14527"/>
        <dbReference type="Rhea" id="RHEA-COMP:17342"/>
        <dbReference type="ChEBI" id="CHEBI:43474"/>
        <dbReference type="ChEBI" id="CHEBI:57930"/>
        <dbReference type="ChEBI" id="CHEBI:140395"/>
        <dbReference type="EC" id="2.7.7.8"/>
    </reaction>
</comment>
<comment type="cofactor">
    <cofactor evidence="1">
        <name>Mg(2+)</name>
        <dbReference type="ChEBI" id="CHEBI:18420"/>
    </cofactor>
</comment>
<comment type="subunit">
    <text evidence="1">Component of the RNA degradosome, which is a multiprotein complex involved in RNA processing and mRNA degradation.</text>
</comment>
<comment type="subcellular location">
    <subcellularLocation>
        <location evidence="1">Cytoplasm</location>
    </subcellularLocation>
</comment>
<comment type="similarity">
    <text evidence="1">Belongs to the polyribonucleotide nucleotidyltransferase family.</text>
</comment>
<gene>
    <name evidence="1" type="primary">pnp</name>
    <name type="ordered locus">AB57_0439</name>
</gene>
<proteinExistence type="inferred from homology"/>
<protein>
    <recommendedName>
        <fullName evidence="1">Polyribonucleotide nucleotidyltransferase</fullName>
        <ecNumber evidence="1">2.7.7.8</ecNumber>
    </recommendedName>
    <alternativeName>
        <fullName evidence="1">Polynucleotide phosphorylase</fullName>
        <shortName evidence="1">PNPase</shortName>
    </alternativeName>
</protein>
<reference key="1">
    <citation type="journal article" date="2008" name="J. Bacteriol.">
        <title>Comparative genome sequence analysis of multidrug-resistant Acinetobacter baumannii.</title>
        <authorList>
            <person name="Adams M.D."/>
            <person name="Goglin K."/>
            <person name="Molyneaux N."/>
            <person name="Hujer K.M."/>
            <person name="Lavender H."/>
            <person name="Jamison J.J."/>
            <person name="MacDonald I.J."/>
            <person name="Martin K.M."/>
            <person name="Russo T."/>
            <person name="Campagnari A.A."/>
            <person name="Hujer A.M."/>
            <person name="Bonomo R.A."/>
            <person name="Gill S.R."/>
        </authorList>
    </citation>
    <scope>NUCLEOTIDE SEQUENCE [LARGE SCALE GENOMIC DNA]</scope>
    <source>
        <strain>AB0057</strain>
    </source>
</reference>
<name>PNP_ACIB5</name>
<dbReference type="EC" id="2.7.7.8" evidence="1"/>
<dbReference type="EMBL" id="CP001182">
    <property type="protein sequence ID" value="ACJ39863.1"/>
    <property type="molecule type" value="Genomic_DNA"/>
</dbReference>
<dbReference type="SMR" id="B7I3U1"/>
<dbReference type="KEGG" id="abn:AB57_0439"/>
<dbReference type="HOGENOM" id="CLU_004217_2_2_6"/>
<dbReference type="Proteomes" id="UP000007094">
    <property type="component" value="Chromosome"/>
</dbReference>
<dbReference type="GO" id="GO:0005829">
    <property type="term" value="C:cytosol"/>
    <property type="evidence" value="ECO:0007669"/>
    <property type="project" value="TreeGrafter"/>
</dbReference>
<dbReference type="GO" id="GO:0000175">
    <property type="term" value="F:3'-5'-RNA exonuclease activity"/>
    <property type="evidence" value="ECO:0007669"/>
    <property type="project" value="TreeGrafter"/>
</dbReference>
<dbReference type="GO" id="GO:0000287">
    <property type="term" value="F:magnesium ion binding"/>
    <property type="evidence" value="ECO:0007669"/>
    <property type="project" value="UniProtKB-UniRule"/>
</dbReference>
<dbReference type="GO" id="GO:0004654">
    <property type="term" value="F:polyribonucleotide nucleotidyltransferase activity"/>
    <property type="evidence" value="ECO:0007669"/>
    <property type="project" value="UniProtKB-UniRule"/>
</dbReference>
<dbReference type="GO" id="GO:0003723">
    <property type="term" value="F:RNA binding"/>
    <property type="evidence" value="ECO:0007669"/>
    <property type="project" value="UniProtKB-UniRule"/>
</dbReference>
<dbReference type="GO" id="GO:0006402">
    <property type="term" value="P:mRNA catabolic process"/>
    <property type="evidence" value="ECO:0007669"/>
    <property type="project" value="UniProtKB-UniRule"/>
</dbReference>
<dbReference type="GO" id="GO:0006396">
    <property type="term" value="P:RNA processing"/>
    <property type="evidence" value="ECO:0007669"/>
    <property type="project" value="InterPro"/>
</dbReference>
<dbReference type="CDD" id="cd02393">
    <property type="entry name" value="KH-I_PNPase"/>
    <property type="match status" value="1"/>
</dbReference>
<dbReference type="CDD" id="cd11363">
    <property type="entry name" value="RNase_PH_PNPase_1"/>
    <property type="match status" value="1"/>
</dbReference>
<dbReference type="CDD" id="cd11364">
    <property type="entry name" value="RNase_PH_PNPase_2"/>
    <property type="match status" value="1"/>
</dbReference>
<dbReference type="CDD" id="cd04472">
    <property type="entry name" value="S1_PNPase"/>
    <property type="match status" value="1"/>
</dbReference>
<dbReference type="FunFam" id="2.40.50.140:FF:000023">
    <property type="entry name" value="Polyribonucleotide nucleotidyltransferase"/>
    <property type="match status" value="1"/>
</dbReference>
<dbReference type="FunFam" id="3.30.1370.10:FF:000001">
    <property type="entry name" value="Polyribonucleotide nucleotidyltransferase"/>
    <property type="match status" value="1"/>
</dbReference>
<dbReference type="FunFam" id="3.30.230.70:FF:000001">
    <property type="entry name" value="Polyribonucleotide nucleotidyltransferase"/>
    <property type="match status" value="1"/>
</dbReference>
<dbReference type="FunFam" id="3.30.230.70:FF:000002">
    <property type="entry name" value="Polyribonucleotide nucleotidyltransferase"/>
    <property type="match status" value="1"/>
</dbReference>
<dbReference type="Gene3D" id="3.30.230.70">
    <property type="entry name" value="GHMP Kinase, N-terminal domain"/>
    <property type="match status" value="2"/>
</dbReference>
<dbReference type="Gene3D" id="3.30.1370.10">
    <property type="entry name" value="K Homology domain, type 1"/>
    <property type="match status" value="1"/>
</dbReference>
<dbReference type="Gene3D" id="2.40.50.140">
    <property type="entry name" value="Nucleic acid-binding proteins"/>
    <property type="match status" value="1"/>
</dbReference>
<dbReference type="HAMAP" id="MF_01595">
    <property type="entry name" value="PNPase"/>
    <property type="match status" value="1"/>
</dbReference>
<dbReference type="InterPro" id="IPR001247">
    <property type="entry name" value="ExoRNase_PH_dom1"/>
</dbReference>
<dbReference type="InterPro" id="IPR015847">
    <property type="entry name" value="ExoRNase_PH_dom2"/>
</dbReference>
<dbReference type="InterPro" id="IPR036345">
    <property type="entry name" value="ExoRNase_PH_dom2_sf"/>
</dbReference>
<dbReference type="InterPro" id="IPR004087">
    <property type="entry name" value="KH_dom"/>
</dbReference>
<dbReference type="InterPro" id="IPR004088">
    <property type="entry name" value="KH_dom_type_1"/>
</dbReference>
<dbReference type="InterPro" id="IPR036612">
    <property type="entry name" value="KH_dom_type_1_sf"/>
</dbReference>
<dbReference type="InterPro" id="IPR012340">
    <property type="entry name" value="NA-bd_OB-fold"/>
</dbReference>
<dbReference type="InterPro" id="IPR012162">
    <property type="entry name" value="PNPase"/>
</dbReference>
<dbReference type="InterPro" id="IPR027408">
    <property type="entry name" value="PNPase/RNase_PH_dom_sf"/>
</dbReference>
<dbReference type="InterPro" id="IPR015848">
    <property type="entry name" value="PNPase_PH_RNA-bd_bac/org-type"/>
</dbReference>
<dbReference type="InterPro" id="IPR036456">
    <property type="entry name" value="PNPase_PH_RNA-bd_sf"/>
</dbReference>
<dbReference type="InterPro" id="IPR020568">
    <property type="entry name" value="Ribosomal_Su5_D2-typ_SF"/>
</dbReference>
<dbReference type="InterPro" id="IPR003029">
    <property type="entry name" value="S1_domain"/>
</dbReference>
<dbReference type="NCBIfam" id="TIGR03591">
    <property type="entry name" value="polynuc_phos"/>
    <property type="match status" value="1"/>
</dbReference>
<dbReference type="NCBIfam" id="NF008805">
    <property type="entry name" value="PRK11824.1"/>
    <property type="match status" value="1"/>
</dbReference>
<dbReference type="PANTHER" id="PTHR11252">
    <property type="entry name" value="POLYRIBONUCLEOTIDE NUCLEOTIDYLTRANSFERASE"/>
    <property type="match status" value="1"/>
</dbReference>
<dbReference type="PANTHER" id="PTHR11252:SF0">
    <property type="entry name" value="POLYRIBONUCLEOTIDE NUCLEOTIDYLTRANSFERASE 1, MITOCHONDRIAL"/>
    <property type="match status" value="1"/>
</dbReference>
<dbReference type="Pfam" id="PF00013">
    <property type="entry name" value="KH_1"/>
    <property type="match status" value="1"/>
</dbReference>
<dbReference type="Pfam" id="PF03726">
    <property type="entry name" value="PNPase"/>
    <property type="match status" value="1"/>
</dbReference>
<dbReference type="Pfam" id="PF01138">
    <property type="entry name" value="RNase_PH"/>
    <property type="match status" value="2"/>
</dbReference>
<dbReference type="Pfam" id="PF03725">
    <property type="entry name" value="RNase_PH_C"/>
    <property type="match status" value="2"/>
</dbReference>
<dbReference type="Pfam" id="PF00575">
    <property type="entry name" value="S1"/>
    <property type="match status" value="1"/>
</dbReference>
<dbReference type="PIRSF" id="PIRSF005499">
    <property type="entry name" value="PNPase"/>
    <property type="match status" value="1"/>
</dbReference>
<dbReference type="SMART" id="SM00322">
    <property type="entry name" value="KH"/>
    <property type="match status" value="1"/>
</dbReference>
<dbReference type="SMART" id="SM00316">
    <property type="entry name" value="S1"/>
    <property type="match status" value="1"/>
</dbReference>
<dbReference type="SUPFAM" id="SSF54791">
    <property type="entry name" value="Eukaryotic type KH-domain (KH-domain type I)"/>
    <property type="match status" value="1"/>
</dbReference>
<dbReference type="SUPFAM" id="SSF50249">
    <property type="entry name" value="Nucleic acid-binding proteins"/>
    <property type="match status" value="1"/>
</dbReference>
<dbReference type="SUPFAM" id="SSF46915">
    <property type="entry name" value="Polynucleotide phosphorylase/guanosine pentaphosphate synthase (PNPase/GPSI), domain 3"/>
    <property type="match status" value="1"/>
</dbReference>
<dbReference type="SUPFAM" id="SSF55666">
    <property type="entry name" value="Ribonuclease PH domain 2-like"/>
    <property type="match status" value="2"/>
</dbReference>
<dbReference type="SUPFAM" id="SSF54211">
    <property type="entry name" value="Ribosomal protein S5 domain 2-like"/>
    <property type="match status" value="2"/>
</dbReference>
<dbReference type="PROSITE" id="PS50084">
    <property type="entry name" value="KH_TYPE_1"/>
    <property type="match status" value="1"/>
</dbReference>
<dbReference type="PROSITE" id="PS50126">
    <property type="entry name" value="S1"/>
    <property type="match status" value="1"/>
</dbReference>
<feature type="chain" id="PRO_1000147872" description="Polyribonucleotide nucleotidyltransferase">
    <location>
        <begin position="1"/>
        <end position="697"/>
    </location>
</feature>
<feature type="domain" description="KH" evidence="1">
    <location>
        <begin position="555"/>
        <end position="614"/>
    </location>
</feature>
<feature type="domain" description="S1 motif" evidence="1">
    <location>
        <begin position="624"/>
        <end position="692"/>
    </location>
</feature>
<feature type="binding site" evidence="1">
    <location>
        <position position="488"/>
    </location>
    <ligand>
        <name>Mg(2+)</name>
        <dbReference type="ChEBI" id="CHEBI:18420"/>
    </ligand>
</feature>
<feature type="binding site" evidence="1">
    <location>
        <position position="494"/>
    </location>
    <ligand>
        <name>Mg(2+)</name>
        <dbReference type="ChEBI" id="CHEBI:18420"/>
    </ligand>
</feature>
<evidence type="ECO:0000255" key="1">
    <source>
        <dbReference type="HAMAP-Rule" id="MF_01595"/>
    </source>
</evidence>
<sequence>MSMFNIVRKEFQFGQHQVVLETGRVARQANTVLITMGGVTVLVAVVAAPTAKAGQDFFPLTVNYQEKQYAAGRIPGGYGKREGRASEAETLISRLIDRPIRPLFPEGYYNEIQVTATVVSSDKTMEADIAAMLGTSAALAIAGTPFRGPIGAARVGLINGEYVLNPNFEQMAQSDLDLVVAGTESAVLMVESEAKELSEDQMLGAVLFGHDEMQIAIQAINEFAAAAGAKPSDWVAPAHNEELRAKLKEAFEAKISEAYTIAVKQDRYAALDALHAEAVAQFVPEEDVDGIADEVDYLFEDLKYRTVRDNILSGKPRIDGRDTKTVRALDVQVGVLERAHGSALFTRGETQALVTTTLGNTRDALMVDTLAGTKTDNFMLHYNFPAYSVGETGRESGPKRREIGHGRLARRGVQAVLPAADRFPYVIRIVSDITESNGSSSMASVCGASLSLMDAGVPLKAPVAGIAMGLVKEGERFAVLSDILGDEDHLGDMDFKVAGSANGITALQMDIKIEGITEEIMEVALNQAFAGRMHILNEMNKVISRARPEISMHAPTFEVITINPDKIRDVIGKGGATIRQITEETKAAIDIEDNGTVRVFGETKAAAKAAIAKIQAITAEVEPGKIYDGKVIRIVEFGAFVNIMPGTDGLLHISQISNERIANVTDVLKEGQEVKVQVQDVDNRGRIKLTMKDIEQA</sequence>